<evidence type="ECO:0000255" key="1">
    <source>
        <dbReference type="HAMAP-Rule" id="MF_01390"/>
    </source>
</evidence>
<feature type="chain" id="PRO_0000143581" description="Maturase K">
    <location>
        <begin position="1"/>
        <end position="509"/>
    </location>
</feature>
<name>MATK_PERAC</name>
<keyword id="KW-0150">Chloroplast</keyword>
<keyword id="KW-0507">mRNA processing</keyword>
<keyword id="KW-0934">Plastid</keyword>
<keyword id="KW-0694">RNA-binding</keyword>
<keyword id="KW-0819">tRNA processing</keyword>
<gene>
    <name evidence="1" type="primary">matK</name>
</gene>
<comment type="function">
    <text evidence="1">Usually encoded in the trnK tRNA gene intron. Probably assists in splicing its own and other chloroplast group II introns.</text>
</comment>
<comment type="subcellular location">
    <subcellularLocation>
        <location>Plastid</location>
        <location>Chloroplast</location>
    </subcellularLocation>
</comment>
<comment type="similarity">
    <text evidence="1">Belongs to the intron maturase 2 family. MatK subfamily.</text>
</comment>
<sequence>MEEFQRYIELDRSWQHNFFYPLIFQEYIYGFAYDHGLNKSILLENAGDKKYSLLIVKRLITRMYQQNHLILSANHSNQNDFFGHKHKKNLYYQIISEGFAVIVEIPFSLLLISSLGAKEKKIVKSHNLRSIHSIFPFFEDKFLHLNYVLEILIPYPIHLEILVQTLRYWVKDASSLHLLRFFLYEYRNWNSLITTQKSISIFSKRNQRLFLFLYNFHVCEYESIFVFLCNQSSHLRSTSFGALLERIYFYGKLEYLVKVFTFTKDFRVILWLFKDPFLHYVRYRGKSILASKGTSLLMHKWKYYLINFWQCHFSLWSQPRRIYINRLSKHSLDFMDFFSSVRLNSSVVRSQMVENSFLIDNPIKKFDTIVRIIPLVGSLAKAKFCNVLGHPISKSVWTDLLDSDIIDRFGRICRNLSHYYSGSSRKKSLYRIKYILRLSCARTLARKHKSTVRAFLKRLGSEFLEEFFTEEEKVLSLILPRDSSISRGLYRGPFWYLDIFCIHDLANDE</sequence>
<reference key="1">
    <citation type="journal article" date="2005" name="Am. J. Bot.">
        <title>Basal cactus phylogeny: implications of Pereskia (Cactaceae) paraphyly for the transition to the cactus life form.</title>
        <authorList>
            <person name="Edwards E.J."/>
            <person name="Nyffeler R."/>
            <person name="Donoghue M.J."/>
        </authorList>
        <dbReference type="AGRICOLA" id="IND43724792"/>
    </citation>
    <scope>NUCLEOTIDE SEQUENCE [GENOMIC DNA]</scope>
</reference>
<accession>Q3MKB3</accession>
<geneLocation type="chloroplast"/>
<proteinExistence type="inferred from homology"/>
<protein>
    <recommendedName>
        <fullName evidence="1">Maturase K</fullName>
    </recommendedName>
    <alternativeName>
        <fullName evidence="1">Intron maturase</fullName>
    </alternativeName>
</protein>
<dbReference type="EMBL" id="AY875355">
    <property type="protein sequence ID" value="AAY30999.1"/>
    <property type="molecule type" value="Genomic_DNA"/>
</dbReference>
<dbReference type="GO" id="GO:0009507">
    <property type="term" value="C:chloroplast"/>
    <property type="evidence" value="ECO:0007669"/>
    <property type="project" value="UniProtKB-SubCell"/>
</dbReference>
<dbReference type="GO" id="GO:0003723">
    <property type="term" value="F:RNA binding"/>
    <property type="evidence" value="ECO:0007669"/>
    <property type="project" value="UniProtKB-KW"/>
</dbReference>
<dbReference type="GO" id="GO:0006397">
    <property type="term" value="P:mRNA processing"/>
    <property type="evidence" value="ECO:0007669"/>
    <property type="project" value="UniProtKB-KW"/>
</dbReference>
<dbReference type="GO" id="GO:0008380">
    <property type="term" value="P:RNA splicing"/>
    <property type="evidence" value="ECO:0007669"/>
    <property type="project" value="UniProtKB-UniRule"/>
</dbReference>
<dbReference type="GO" id="GO:0008033">
    <property type="term" value="P:tRNA processing"/>
    <property type="evidence" value="ECO:0007669"/>
    <property type="project" value="UniProtKB-KW"/>
</dbReference>
<dbReference type="HAMAP" id="MF_01390">
    <property type="entry name" value="MatK"/>
    <property type="match status" value="1"/>
</dbReference>
<dbReference type="InterPro" id="IPR024937">
    <property type="entry name" value="Domain_X"/>
</dbReference>
<dbReference type="InterPro" id="IPR002866">
    <property type="entry name" value="Maturase_MatK"/>
</dbReference>
<dbReference type="InterPro" id="IPR024942">
    <property type="entry name" value="Maturase_MatK_N"/>
</dbReference>
<dbReference type="PANTHER" id="PTHR34811">
    <property type="entry name" value="MATURASE K"/>
    <property type="match status" value="1"/>
</dbReference>
<dbReference type="PANTHER" id="PTHR34811:SF1">
    <property type="entry name" value="MATURASE K"/>
    <property type="match status" value="1"/>
</dbReference>
<dbReference type="Pfam" id="PF01348">
    <property type="entry name" value="Intron_maturas2"/>
    <property type="match status" value="1"/>
</dbReference>
<dbReference type="Pfam" id="PF01824">
    <property type="entry name" value="MatK_N"/>
    <property type="match status" value="1"/>
</dbReference>
<organism>
    <name type="scientific">Pereskia aculeata</name>
    <name type="common">Barbados gooseberry</name>
    <name type="synonym">Cactus pereskia</name>
    <dbReference type="NCBI Taxonomy" id="3597"/>
    <lineage>
        <taxon>Eukaryota</taxon>
        <taxon>Viridiplantae</taxon>
        <taxon>Streptophyta</taxon>
        <taxon>Embryophyta</taxon>
        <taxon>Tracheophyta</taxon>
        <taxon>Spermatophyta</taxon>
        <taxon>Magnoliopsida</taxon>
        <taxon>eudicotyledons</taxon>
        <taxon>Gunneridae</taxon>
        <taxon>Pentapetalae</taxon>
        <taxon>Caryophyllales</taxon>
        <taxon>Cactineae</taxon>
        <taxon>Cactaceae</taxon>
        <taxon>Pereskioideae</taxon>
        <taxon>Pereskia</taxon>
    </lineage>
</organism>